<gene>
    <name evidence="1" type="primary">rplP</name>
    <name evidence="1" type="synonym">rpl16</name>
</gene>
<keyword id="KW-0687">Ribonucleoprotein</keyword>
<keyword id="KW-0689">Ribosomal protein</keyword>
<keyword id="KW-0694">RNA-binding</keyword>
<keyword id="KW-0699">rRNA-binding</keyword>
<keyword id="KW-0820">tRNA-binding</keyword>
<comment type="function">
    <text evidence="1">Binds 23S rRNA and is also seen to make contacts with the A and possibly P site tRNAs.</text>
</comment>
<comment type="subunit">
    <text evidence="1">Part of the 50S ribosomal subunit.</text>
</comment>
<comment type="similarity">
    <text evidence="1">Belongs to the universal ribosomal protein uL16 family.</text>
</comment>
<reference key="1">
    <citation type="journal article" date="2004" name="J. Bacteriol.">
        <title>Genomic DNA microarray analysis: identification of new genes regulated by light color in the cyanobacterium Fremyella diplosiphon.</title>
        <authorList>
            <person name="Stowe-Evans E.L."/>
            <person name="Ford J."/>
            <person name="Kehoe D.M."/>
        </authorList>
    </citation>
    <scope>NUCLEOTIDE SEQUENCE [GENOMIC DNA]</scope>
    <source>
        <strain>FD33</strain>
    </source>
</reference>
<dbReference type="EMBL" id="AY548435">
    <property type="protein sequence ID" value="AAT41876.1"/>
    <property type="molecule type" value="Genomic_DNA"/>
</dbReference>
<dbReference type="SMR" id="Q6H090"/>
<dbReference type="GO" id="GO:0022625">
    <property type="term" value="C:cytosolic large ribosomal subunit"/>
    <property type="evidence" value="ECO:0007669"/>
    <property type="project" value="TreeGrafter"/>
</dbReference>
<dbReference type="GO" id="GO:0019843">
    <property type="term" value="F:rRNA binding"/>
    <property type="evidence" value="ECO:0007669"/>
    <property type="project" value="UniProtKB-UniRule"/>
</dbReference>
<dbReference type="GO" id="GO:0003735">
    <property type="term" value="F:structural constituent of ribosome"/>
    <property type="evidence" value="ECO:0007669"/>
    <property type="project" value="InterPro"/>
</dbReference>
<dbReference type="GO" id="GO:0000049">
    <property type="term" value="F:tRNA binding"/>
    <property type="evidence" value="ECO:0007669"/>
    <property type="project" value="UniProtKB-KW"/>
</dbReference>
<dbReference type="GO" id="GO:0006412">
    <property type="term" value="P:translation"/>
    <property type="evidence" value="ECO:0007669"/>
    <property type="project" value="UniProtKB-UniRule"/>
</dbReference>
<dbReference type="CDD" id="cd01433">
    <property type="entry name" value="Ribosomal_L16_L10e"/>
    <property type="match status" value="1"/>
</dbReference>
<dbReference type="FunFam" id="3.90.1170.10:FF:000001">
    <property type="entry name" value="50S ribosomal protein L16"/>
    <property type="match status" value="1"/>
</dbReference>
<dbReference type="Gene3D" id="3.90.1170.10">
    <property type="entry name" value="Ribosomal protein L10e/L16"/>
    <property type="match status" value="1"/>
</dbReference>
<dbReference type="HAMAP" id="MF_01342">
    <property type="entry name" value="Ribosomal_uL16"/>
    <property type="match status" value="1"/>
</dbReference>
<dbReference type="InterPro" id="IPR047873">
    <property type="entry name" value="Ribosomal_uL16"/>
</dbReference>
<dbReference type="InterPro" id="IPR000114">
    <property type="entry name" value="Ribosomal_uL16_bact-type"/>
</dbReference>
<dbReference type="InterPro" id="IPR020798">
    <property type="entry name" value="Ribosomal_uL16_CS"/>
</dbReference>
<dbReference type="InterPro" id="IPR016180">
    <property type="entry name" value="Ribosomal_uL16_dom"/>
</dbReference>
<dbReference type="InterPro" id="IPR036920">
    <property type="entry name" value="Ribosomal_uL16_sf"/>
</dbReference>
<dbReference type="NCBIfam" id="TIGR01164">
    <property type="entry name" value="rplP_bact"/>
    <property type="match status" value="1"/>
</dbReference>
<dbReference type="PANTHER" id="PTHR12220">
    <property type="entry name" value="50S/60S RIBOSOMAL PROTEIN L16"/>
    <property type="match status" value="1"/>
</dbReference>
<dbReference type="PANTHER" id="PTHR12220:SF13">
    <property type="entry name" value="LARGE RIBOSOMAL SUBUNIT PROTEIN UL16M"/>
    <property type="match status" value="1"/>
</dbReference>
<dbReference type="Pfam" id="PF00252">
    <property type="entry name" value="Ribosomal_L16"/>
    <property type="match status" value="1"/>
</dbReference>
<dbReference type="PRINTS" id="PR00060">
    <property type="entry name" value="RIBOSOMALL16"/>
</dbReference>
<dbReference type="SUPFAM" id="SSF54686">
    <property type="entry name" value="Ribosomal protein L16p/L10e"/>
    <property type="match status" value="1"/>
</dbReference>
<dbReference type="PROSITE" id="PS00586">
    <property type="entry name" value="RIBOSOMAL_L16_1"/>
    <property type="match status" value="1"/>
</dbReference>
<dbReference type="PROSITE" id="PS00701">
    <property type="entry name" value="RIBOSOMAL_L16_2"/>
    <property type="match status" value="1"/>
</dbReference>
<proteinExistence type="inferred from homology"/>
<sequence length="141" mass="16255">MLSPRRTKFRKQQRGRMEGLAHRGSTLNFGDFALQAQEPAWITSRQIEASRRAMTRYIRRGGQIWIRIFPDKPVTMRPAETRMGSGKGNPEFWVAVVKPGRILFEIAGVSEEVAREAMRLAAYKLPIKTKFIVRPQVQEQE</sequence>
<protein>
    <recommendedName>
        <fullName evidence="1">Large ribosomal subunit protein uL16</fullName>
    </recommendedName>
    <alternativeName>
        <fullName evidence="2">50S ribosomal protein L16</fullName>
    </alternativeName>
</protein>
<evidence type="ECO:0000255" key="1">
    <source>
        <dbReference type="HAMAP-Rule" id="MF_01342"/>
    </source>
</evidence>
<evidence type="ECO:0000305" key="2"/>
<name>RL16_MICDP</name>
<accession>Q6H090</accession>
<organism>
    <name type="scientific">Microchaete diplosiphon</name>
    <name type="common">Fremyella diplosiphon</name>
    <dbReference type="NCBI Taxonomy" id="1197"/>
    <lineage>
        <taxon>Bacteria</taxon>
        <taxon>Bacillati</taxon>
        <taxon>Cyanobacteriota</taxon>
        <taxon>Cyanophyceae</taxon>
        <taxon>Nostocales</taxon>
        <taxon>Rivulariaceae</taxon>
        <taxon>Microchaete</taxon>
    </lineage>
</organism>
<feature type="chain" id="PRO_0000062105" description="Large ribosomal subunit protein uL16">
    <location>
        <begin position="1"/>
        <end position="141"/>
    </location>
</feature>